<sequence>MIGVIGVKRNVDIAIREKLALYPKKHKKYVGELLNSFKEVVILNTCNRTEIYFNCTEEISEDEIFDKIFNVFNWNDDLKKYMFLSKEKRAVTHLMEVICGFHSRILGEDQILGQIKGAYKTAISDNSISSELQKMFEIAIACGKKFKTECKMFEVPVSSVSISINSALLKGCRKFMVLGYGEIGKLAIKHLLSHKVECIYLIVRDKSKASDLEGEIVEVLDFNEKNQVINEIDCIVSCTAAPHTVVRNEDIKTEGETIHIYDLAVPRDVDKELSEKERVILKDIDEISKIDDKNKKIRKERMEEYKHIVEESIDEFLNWLKIREVSSKIRNIKIRENEICSERIKTFSNKGNGENAKLAERMIKSTADAYVNRAIELLKSEALKGSDSYCAEIIEKIFLT</sequence>
<gene>
    <name evidence="1" type="primary">hemA</name>
    <name type="ordered locus">CPF_1690</name>
</gene>
<evidence type="ECO:0000255" key="1">
    <source>
        <dbReference type="HAMAP-Rule" id="MF_00087"/>
    </source>
</evidence>
<protein>
    <recommendedName>
        <fullName evidence="1">Glutamyl-tRNA reductase</fullName>
        <shortName evidence="1">GluTR</shortName>
        <ecNumber evidence="1">1.2.1.70</ecNumber>
    </recommendedName>
</protein>
<feature type="chain" id="PRO_0000273584" description="Glutamyl-tRNA reductase">
    <location>
        <begin position="1"/>
        <end position="400"/>
    </location>
</feature>
<feature type="active site" description="Nucleophile" evidence="1">
    <location>
        <position position="46"/>
    </location>
</feature>
<feature type="binding site" evidence="1">
    <location>
        <begin position="45"/>
        <end position="48"/>
    </location>
    <ligand>
        <name>substrate</name>
    </ligand>
</feature>
<feature type="binding site" evidence="1">
    <location>
        <position position="103"/>
    </location>
    <ligand>
        <name>substrate</name>
    </ligand>
</feature>
<feature type="binding site" evidence="1">
    <location>
        <begin position="108"/>
        <end position="110"/>
    </location>
    <ligand>
        <name>substrate</name>
    </ligand>
</feature>
<feature type="binding site" evidence="1">
    <location>
        <position position="114"/>
    </location>
    <ligand>
        <name>substrate</name>
    </ligand>
</feature>
<feature type="binding site" evidence="1">
    <location>
        <begin position="179"/>
        <end position="184"/>
    </location>
    <ligand>
        <name>NADP(+)</name>
        <dbReference type="ChEBI" id="CHEBI:58349"/>
    </ligand>
</feature>
<feature type="site" description="Important for activity" evidence="1">
    <location>
        <position position="93"/>
    </location>
</feature>
<keyword id="KW-0521">NADP</keyword>
<keyword id="KW-0560">Oxidoreductase</keyword>
<keyword id="KW-0627">Porphyrin biosynthesis</keyword>
<reference key="1">
    <citation type="journal article" date="1999" name="Microbiol. Immunol.">
        <title>A Clostridium perfringens hem gene cluster contains a cysG(B) homologue that is involved in cobalamin biosynthesis.</title>
        <authorList>
            <person name="Koyama M."/>
            <person name="Katayama S."/>
            <person name="Kaji M."/>
            <person name="Taniguchi Y."/>
            <person name="Matsushita O."/>
            <person name="Minami J."/>
            <person name="Morita S."/>
            <person name="Okabe A."/>
        </authorList>
    </citation>
    <scope>NUCLEOTIDE SEQUENCE [GENOMIC DNA]</scope>
</reference>
<reference key="2">
    <citation type="journal article" date="2006" name="Genome Res.">
        <title>Skewed genomic variability in strains of the toxigenic bacterial pathogen, Clostridium perfringens.</title>
        <authorList>
            <person name="Myers G.S.A."/>
            <person name="Rasko D.A."/>
            <person name="Cheung J.K."/>
            <person name="Ravel J."/>
            <person name="Seshadri R."/>
            <person name="DeBoy R.T."/>
            <person name="Ren Q."/>
            <person name="Varga J."/>
            <person name="Awad M.M."/>
            <person name="Brinkac L.M."/>
            <person name="Daugherty S.C."/>
            <person name="Haft D.H."/>
            <person name="Dodson R.J."/>
            <person name="Madupu R."/>
            <person name="Nelson W.C."/>
            <person name="Rosovitz M.J."/>
            <person name="Sullivan S.A."/>
            <person name="Khouri H."/>
            <person name="Dimitrov G.I."/>
            <person name="Watkins K.L."/>
            <person name="Mulligan S."/>
            <person name="Benton J."/>
            <person name="Radune D."/>
            <person name="Fisher D.J."/>
            <person name="Atkins H.S."/>
            <person name="Hiscox T."/>
            <person name="Jost B.H."/>
            <person name="Billington S.J."/>
            <person name="Songer J.G."/>
            <person name="McClane B.A."/>
            <person name="Titball R.W."/>
            <person name="Rood J.I."/>
            <person name="Melville S.B."/>
            <person name="Paulsen I.T."/>
        </authorList>
    </citation>
    <scope>NUCLEOTIDE SEQUENCE [LARGE SCALE GENOMIC DNA]</scope>
    <source>
        <strain>ATCC 13124 / DSM 756 / JCM 1290 / NCIMB 6125 / NCTC 8237 / S 107 / Type A</strain>
    </source>
</reference>
<dbReference type="EC" id="1.2.1.70" evidence="1"/>
<dbReference type="EMBL" id="AB017186">
    <property type="protein sequence ID" value="BAA74779.1"/>
    <property type="molecule type" value="Genomic_DNA"/>
</dbReference>
<dbReference type="EMBL" id="CP000246">
    <property type="protein sequence ID" value="ABG82681.1"/>
    <property type="molecule type" value="Genomic_DNA"/>
</dbReference>
<dbReference type="PIR" id="T43856">
    <property type="entry name" value="T43856"/>
</dbReference>
<dbReference type="RefSeq" id="WP_011590844.1">
    <property type="nucleotide sequence ID" value="NC_008261.1"/>
</dbReference>
<dbReference type="SMR" id="Q0TQG2"/>
<dbReference type="STRING" id="195103.CPF_1690"/>
<dbReference type="PaxDb" id="195103-CPF_1690"/>
<dbReference type="DNASU" id="4201303"/>
<dbReference type="KEGG" id="cpf:CPF_1690"/>
<dbReference type="eggNOG" id="COG0373">
    <property type="taxonomic scope" value="Bacteria"/>
</dbReference>
<dbReference type="HOGENOM" id="CLU_035113_1_0_9"/>
<dbReference type="UniPathway" id="UPA00251">
    <property type="reaction ID" value="UER00316"/>
</dbReference>
<dbReference type="Proteomes" id="UP000001823">
    <property type="component" value="Chromosome"/>
</dbReference>
<dbReference type="GO" id="GO:0008883">
    <property type="term" value="F:glutamyl-tRNA reductase activity"/>
    <property type="evidence" value="ECO:0007669"/>
    <property type="project" value="UniProtKB-UniRule"/>
</dbReference>
<dbReference type="GO" id="GO:0050661">
    <property type="term" value="F:NADP binding"/>
    <property type="evidence" value="ECO:0007669"/>
    <property type="project" value="InterPro"/>
</dbReference>
<dbReference type="GO" id="GO:0019353">
    <property type="term" value="P:protoporphyrinogen IX biosynthetic process from glutamate"/>
    <property type="evidence" value="ECO:0007669"/>
    <property type="project" value="TreeGrafter"/>
</dbReference>
<dbReference type="FunFam" id="3.30.460.30:FF:000001">
    <property type="entry name" value="Glutamyl-tRNA reductase"/>
    <property type="match status" value="1"/>
</dbReference>
<dbReference type="Gene3D" id="3.30.460.30">
    <property type="entry name" value="Glutamyl-tRNA reductase, N-terminal domain"/>
    <property type="match status" value="1"/>
</dbReference>
<dbReference type="Gene3D" id="3.40.50.720">
    <property type="entry name" value="NAD(P)-binding Rossmann-like Domain"/>
    <property type="match status" value="1"/>
</dbReference>
<dbReference type="HAMAP" id="MF_00087">
    <property type="entry name" value="Glu_tRNA_reductase"/>
    <property type="match status" value="1"/>
</dbReference>
<dbReference type="InterPro" id="IPR000343">
    <property type="entry name" value="4pyrrol_synth_GluRdtase"/>
</dbReference>
<dbReference type="InterPro" id="IPR015896">
    <property type="entry name" value="4pyrrol_synth_GluRdtase_dimer"/>
</dbReference>
<dbReference type="InterPro" id="IPR015895">
    <property type="entry name" value="4pyrrol_synth_GluRdtase_N"/>
</dbReference>
<dbReference type="InterPro" id="IPR018214">
    <property type="entry name" value="GluRdtase_CS"/>
</dbReference>
<dbReference type="InterPro" id="IPR036343">
    <property type="entry name" value="GluRdtase_N_sf"/>
</dbReference>
<dbReference type="InterPro" id="IPR036291">
    <property type="entry name" value="NAD(P)-bd_dom_sf"/>
</dbReference>
<dbReference type="InterPro" id="IPR006151">
    <property type="entry name" value="Shikm_DH/Glu-tRNA_Rdtase"/>
</dbReference>
<dbReference type="NCBIfam" id="TIGR01035">
    <property type="entry name" value="hemA"/>
    <property type="match status" value="1"/>
</dbReference>
<dbReference type="PANTHER" id="PTHR43013">
    <property type="entry name" value="GLUTAMYL-TRNA REDUCTASE"/>
    <property type="match status" value="1"/>
</dbReference>
<dbReference type="PANTHER" id="PTHR43013:SF1">
    <property type="entry name" value="GLUTAMYL-TRNA REDUCTASE"/>
    <property type="match status" value="1"/>
</dbReference>
<dbReference type="Pfam" id="PF00745">
    <property type="entry name" value="GlutR_dimer"/>
    <property type="match status" value="1"/>
</dbReference>
<dbReference type="Pfam" id="PF05201">
    <property type="entry name" value="GlutR_N"/>
    <property type="match status" value="1"/>
</dbReference>
<dbReference type="Pfam" id="PF01488">
    <property type="entry name" value="Shikimate_DH"/>
    <property type="match status" value="1"/>
</dbReference>
<dbReference type="PIRSF" id="PIRSF000445">
    <property type="entry name" value="4pyrrol_synth_GluRdtase"/>
    <property type="match status" value="1"/>
</dbReference>
<dbReference type="SUPFAM" id="SSF69742">
    <property type="entry name" value="Glutamyl tRNA-reductase catalytic, N-terminal domain"/>
    <property type="match status" value="1"/>
</dbReference>
<dbReference type="SUPFAM" id="SSF51735">
    <property type="entry name" value="NAD(P)-binding Rossmann-fold domains"/>
    <property type="match status" value="1"/>
</dbReference>
<dbReference type="PROSITE" id="PS00747">
    <property type="entry name" value="GLUTR"/>
    <property type="match status" value="1"/>
</dbReference>
<name>HEM1_CLOP1</name>
<organism>
    <name type="scientific">Clostridium perfringens (strain ATCC 13124 / DSM 756 / JCM 1290 / NCIMB 6125 / NCTC 8237 / Type A)</name>
    <dbReference type="NCBI Taxonomy" id="195103"/>
    <lineage>
        <taxon>Bacteria</taxon>
        <taxon>Bacillati</taxon>
        <taxon>Bacillota</taxon>
        <taxon>Clostridia</taxon>
        <taxon>Eubacteriales</taxon>
        <taxon>Clostridiaceae</taxon>
        <taxon>Clostridium</taxon>
    </lineage>
</organism>
<comment type="function">
    <text evidence="1">Catalyzes the NADPH-dependent reduction of glutamyl-tRNA(Glu) to glutamate 1-semialdehyde (GSA).</text>
</comment>
<comment type="catalytic activity">
    <reaction evidence="1">
        <text>(S)-4-amino-5-oxopentanoate + tRNA(Glu) + NADP(+) = L-glutamyl-tRNA(Glu) + NADPH + H(+)</text>
        <dbReference type="Rhea" id="RHEA:12344"/>
        <dbReference type="Rhea" id="RHEA-COMP:9663"/>
        <dbReference type="Rhea" id="RHEA-COMP:9680"/>
        <dbReference type="ChEBI" id="CHEBI:15378"/>
        <dbReference type="ChEBI" id="CHEBI:57501"/>
        <dbReference type="ChEBI" id="CHEBI:57783"/>
        <dbReference type="ChEBI" id="CHEBI:58349"/>
        <dbReference type="ChEBI" id="CHEBI:78442"/>
        <dbReference type="ChEBI" id="CHEBI:78520"/>
        <dbReference type="EC" id="1.2.1.70"/>
    </reaction>
</comment>
<comment type="pathway">
    <text evidence="1">Porphyrin-containing compound metabolism; protoporphyrin-IX biosynthesis; 5-aminolevulinate from L-glutamyl-tRNA(Glu): step 1/2.</text>
</comment>
<comment type="subunit">
    <text evidence="1">Homodimer.</text>
</comment>
<comment type="domain">
    <text evidence="1">Possesses an unusual extended V-shaped dimeric structure with each monomer consisting of three distinct domains arranged along a curved 'spinal' alpha-helix. The N-terminal catalytic domain specifically recognizes the glutamate moiety of the substrate. The second domain is the NADPH-binding domain, and the third C-terminal domain is responsible for dimerization.</text>
</comment>
<comment type="miscellaneous">
    <text evidence="1">During catalysis, the active site Cys acts as a nucleophile attacking the alpha-carbonyl group of tRNA-bound glutamate with the formation of a thioester intermediate between enzyme and glutamate, and the concomitant release of tRNA(Glu). The thioester intermediate is finally reduced by direct hydride transfer from NADPH, to form the product GSA.</text>
</comment>
<comment type="similarity">
    <text evidence="1">Belongs to the glutamyl-tRNA reductase family.</text>
</comment>
<accession>Q0TQG2</accession>
<accession>Q9ZND3</accession>
<proteinExistence type="inferred from homology"/>